<evidence type="ECO:0000255" key="1"/>
<evidence type="ECO:0000305" key="2"/>
<gene>
    <name type="primary">cvpA</name>
    <name type="ordered locus">HI_1206</name>
</gene>
<feature type="chain" id="PRO_0000079582" description="Colicin V production protein homolog">
    <location>
        <begin position="1"/>
        <end position="163"/>
    </location>
</feature>
<feature type="transmembrane region" description="Helical" evidence="1">
    <location>
        <begin position="2"/>
        <end position="22"/>
    </location>
</feature>
<feature type="transmembrane region" description="Helical" evidence="1">
    <location>
        <begin position="26"/>
        <end position="46"/>
    </location>
</feature>
<feature type="transmembrane region" description="Helical" evidence="1">
    <location>
        <begin position="62"/>
        <end position="82"/>
    </location>
</feature>
<feature type="transmembrane region" description="Helical" evidence="1">
    <location>
        <begin position="97"/>
        <end position="117"/>
    </location>
</feature>
<reference key="1">
    <citation type="journal article" date="1995" name="Science">
        <title>Whole-genome random sequencing and assembly of Haemophilus influenzae Rd.</title>
        <authorList>
            <person name="Fleischmann R.D."/>
            <person name="Adams M.D."/>
            <person name="White O."/>
            <person name="Clayton R.A."/>
            <person name="Kirkness E.F."/>
            <person name="Kerlavage A.R."/>
            <person name="Bult C.J."/>
            <person name="Tomb J.-F."/>
            <person name="Dougherty B.A."/>
            <person name="Merrick J.M."/>
            <person name="McKenney K."/>
            <person name="Sutton G.G."/>
            <person name="FitzHugh W."/>
            <person name="Fields C.A."/>
            <person name="Gocayne J.D."/>
            <person name="Scott J.D."/>
            <person name="Shirley R."/>
            <person name="Liu L.-I."/>
            <person name="Glodek A."/>
            <person name="Kelley J.M."/>
            <person name="Weidman J.F."/>
            <person name="Phillips C.A."/>
            <person name="Spriggs T."/>
            <person name="Hedblom E."/>
            <person name="Cotton M.D."/>
            <person name="Utterback T.R."/>
            <person name="Hanna M.C."/>
            <person name="Nguyen D.T."/>
            <person name="Saudek D.M."/>
            <person name="Brandon R.C."/>
            <person name="Fine L.D."/>
            <person name="Fritchman J.L."/>
            <person name="Fuhrmann J.L."/>
            <person name="Geoghagen N.S.M."/>
            <person name="Gnehm C.L."/>
            <person name="McDonald L.A."/>
            <person name="Small K.V."/>
            <person name="Fraser C.M."/>
            <person name="Smith H.O."/>
            <person name="Venter J.C."/>
        </authorList>
    </citation>
    <scope>NUCLEOTIDE SEQUENCE [LARGE SCALE GENOMIC DNA]</scope>
    <source>
        <strain>ATCC 51907 / DSM 11121 / KW20 / Rd</strain>
    </source>
</reference>
<proteinExistence type="predicted"/>
<organism>
    <name type="scientific">Haemophilus influenzae (strain ATCC 51907 / DSM 11121 / KW20 / Rd)</name>
    <dbReference type="NCBI Taxonomy" id="71421"/>
    <lineage>
        <taxon>Bacteria</taxon>
        <taxon>Pseudomonadati</taxon>
        <taxon>Pseudomonadota</taxon>
        <taxon>Gammaproteobacteria</taxon>
        <taxon>Pasteurellales</taxon>
        <taxon>Pasteurellaceae</taxon>
        <taxon>Haemophilus</taxon>
    </lineage>
</organism>
<sequence length="163" mass="18246">MIDYIIIGIIAFSILVSLLRGFVREVLSLGSWIVAFIVASQFYPYLAAYLTQIESMYIRNGTAIAILFVLTLIVGAIVNYVISQLVDKTGLSGTDRVLGAAFGLVRGALIVAALLFFMDTFTNFEQTDWWKESQLIPHFGFIIEWFFQQLQASSSFLTPTLNQ</sequence>
<comment type="subcellular location">
    <subcellularLocation>
        <location evidence="2">Cell membrane</location>
        <topology evidence="2">Multi-pass membrane protein</topology>
    </subcellularLocation>
</comment>
<comment type="similarity">
    <text evidence="2">To E.coli CvpA.</text>
</comment>
<protein>
    <recommendedName>
        <fullName>Colicin V production protein homolog</fullName>
    </recommendedName>
</protein>
<name>CVPA_HAEIN</name>
<accession>P45108</accession>
<keyword id="KW-1003">Cell membrane</keyword>
<keyword id="KW-0472">Membrane</keyword>
<keyword id="KW-1185">Reference proteome</keyword>
<keyword id="KW-0812">Transmembrane</keyword>
<keyword id="KW-1133">Transmembrane helix</keyword>
<dbReference type="EMBL" id="L42023">
    <property type="protein sequence ID" value="AAC22860.1"/>
    <property type="molecule type" value="Genomic_DNA"/>
</dbReference>
<dbReference type="PIR" id="H64189">
    <property type="entry name" value="H64189"/>
</dbReference>
<dbReference type="RefSeq" id="NP_439362.1">
    <property type="nucleotide sequence ID" value="NC_000907.1"/>
</dbReference>
<dbReference type="STRING" id="71421.HI_1206"/>
<dbReference type="EnsemblBacteria" id="AAC22860">
    <property type="protein sequence ID" value="AAC22860"/>
    <property type="gene ID" value="HI_1206"/>
</dbReference>
<dbReference type="KEGG" id="hin:HI_1206"/>
<dbReference type="PATRIC" id="fig|71421.8.peg.1258"/>
<dbReference type="eggNOG" id="COG1286">
    <property type="taxonomic scope" value="Bacteria"/>
</dbReference>
<dbReference type="HOGENOM" id="CLU_092720_2_1_6"/>
<dbReference type="OrthoDB" id="9810601at2"/>
<dbReference type="PhylomeDB" id="P45108"/>
<dbReference type="BioCyc" id="HINF71421:G1GJ1-1237-MONOMER"/>
<dbReference type="Proteomes" id="UP000000579">
    <property type="component" value="Chromosome"/>
</dbReference>
<dbReference type="GO" id="GO:0005886">
    <property type="term" value="C:plasma membrane"/>
    <property type="evidence" value="ECO:0007669"/>
    <property type="project" value="UniProtKB-SubCell"/>
</dbReference>
<dbReference type="GO" id="GO:0009403">
    <property type="term" value="P:toxin biosynthetic process"/>
    <property type="evidence" value="ECO:0007669"/>
    <property type="project" value="InterPro"/>
</dbReference>
<dbReference type="InterPro" id="IPR003825">
    <property type="entry name" value="Colicin-V_CvpA"/>
</dbReference>
<dbReference type="InterPro" id="IPR052719">
    <property type="entry name" value="CvpA-like"/>
</dbReference>
<dbReference type="PANTHER" id="PTHR36926">
    <property type="entry name" value="COLICIN V PRODUCTION PROTEIN"/>
    <property type="match status" value="1"/>
</dbReference>
<dbReference type="PANTHER" id="PTHR36926:SF1">
    <property type="entry name" value="COLICIN V PRODUCTION PROTEIN"/>
    <property type="match status" value="1"/>
</dbReference>
<dbReference type="Pfam" id="PF02674">
    <property type="entry name" value="Colicin_V"/>
    <property type="match status" value="1"/>
</dbReference>